<accession>Q3IIR9</accession>
<keyword id="KW-0378">Hydrolase</keyword>
<keyword id="KW-0479">Metal-binding</keyword>
<keyword id="KW-1185">Reference proteome</keyword>
<keyword id="KW-0862">Zinc</keyword>
<organism>
    <name type="scientific">Pseudoalteromonas translucida (strain TAC 125)</name>
    <dbReference type="NCBI Taxonomy" id="326442"/>
    <lineage>
        <taxon>Bacteria</taxon>
        <taxon>Pseudomonadati</taxon>
        <taxon>Pseudomonadota</taxon>
        <taxon>Gammaproteobacteria</taxon>
        <taxon>Alteromonadales</taxon>
        <taxon>Pseudoalteromonadaceae</taxon>
        <taxon>Pseudoalteromonas</taxon>
    </lineage>
</organism>
<name>GLO2_PSET1</name>
<sequence>MVQVKAIKAFSDNYIWCLTTSNNTQAWVVDPGQAEPVLDYLAQHNLTLAGILITHHHYDHTDGVAKLVSENPNIAVYGPTNSPFKGITQQLTDGQSITVLNTAFNIIATPGHTLDHICYVNEQLAFTGDTLFSGGCGRLFEGSAEQMWHSFNKLRELPADCKVYCTHEYTQANLAFATAIEPRNPELLAYSKRVDELRSKNEITLPSTIGQELKINPFMRSDLPNITELLPKEFCSVTKNNEPWENFAGLRKFKDHF</sequence>
<protein>
    <recommendedName>
        <fullName evidence="1">Hydroxyacylglutathione hydrolase</fullName>
        <ecNumber evidence="1">3.1.2.6</ecNumber>
    </recommendedName>
    <alternativeName>
        <fullName evidence="1">Glyoxalase II</fullName>
        <shortName evidence="1">Glx II</shortName>
    </alternativeName>
</protein>
<comment type="function">
    <text evidence="1">Thiolesterase that catalyzes the hydrolysis of S-D-lactoyl-glutathione to form glutathione and D-lactic acid.</text>
</comment>
<comment type="catalytic activity">
    <reaction evidence="1">
        <text>an S-(2-hydroxyacyl)glutathione + H2O = a 2-hydroxy carboxylate + glutathione + H(+)</text>
        <dbReference type="Rhea" id="RHEA:21864"/>
        <dbReference type="ChEBI" id="CHEBI:15377"/>
        <dbReference type="ChEBI" id="CHEBI:15378"/>
        <dbReference type="ChEBI" id="CHEBI:57925"/>
        <dbReference type="ChEBI" id="CHEBI:58896"/>
        <dbReference type="ChEBI" id="CHEBI:71261"/>
        <dbReference type="EC" id="3.1.2.6"/>
    </reaction>
</comment>
<comment type="cofactor">
    <cofactor evidence="1">
        <name>Zn(2+)</name>
        <dbReference type="ChEBI" id="CHEBI:29105"/>
    </cofactor>
    <text evidence="1">Binds 2 Zn(2+) ions per subunit.</text>
</comment>
<comment type="pathway">
    <text evidence="1">Secondary metabolite metabolism; methylglyoxal degradation; (R)-lactate from methylglyoxal: step 2/2.</text>
</comment>
<comment type="subunit">
    <text evidence="1">Monomer.</text>
</comment>
<comment type="similarity">
    <text evidence="1">Belongs to the metallo-beta-lactamase superfamily. Glyoxalase II family.</text>
</comment>
<gene>
    <name evidence="1" type="primary">gloB</name>
    <name type="ordered locus">PSHAa1966</name>
</gene>
<evidence type="ECO:0000255" key="1">
    <source>
        <dbReference type="HAMAP-Rule" id="MF_01374"/>
    </source>
</evidence>
<reference key="1">
    <citation type="journal article" date="2005" name="Genome Res.">
        <title>Coping with cold: the genome of the versatile marine Antarctica bacterium Pseudoalteromonas haloplanktis TAC125.</title>
        <authorList>
            <person name="Medigue C."/>
            <person name="Krin E."/>
            <person name="Pascal G."/>
            <person name="Barbe V."/>
            <person name="Bernsel A."/>
            <person name="Bertin P.N."/>
            <person name="Cheung F."/>
            <person name="Cruveiller S."/>
            <person name="D'Amico S."/>
            <person name="Duilio A."/>
            <person name="Fang G."/>
            <person name="Feller G."/>
            <person name="Ho C."/>
            <person name="Mangenot S."/>
            <person name="Marino G."/>
            <person name="Nilsson J."/>
            <person name="Parrilli E."/>
            <person name="Rocha E.P.C."/>
            <person name="Rouy Z."/>
            <person name="Sekowska A."/>
            <person name="Tutino M.L."/>
            <person name="Vallenet D."/>
            <person name="von Heijne G."/>
            <person name="Danchin A."/>
        </authorList>
    </citation>
    <scope>NUCLEOTIDE SEQUENCE [LARGE SCALE GENOMIC DNA]</scope>
    <source>
        <strain>TAC 125</strain>
    </source>
</reference>
<feature type="chain" id="PRO_0000309683" description="Hydroxyacylglutathione hydrolase">
    <location>
        <begin position="1"/>
        <end position="257"/>
    </location>
</feature>
<feature type="binding site" evidence="1">
    <location>
        <position position="55"/>
    </location>
    <ligand>
        <name>Zn(2+)</name>
        <dbReference type="ChEBI" id="CHEBI:29105"/>
        <label>1</label>
    </ligand>
</feature>
<feature type="binding site" evidence="1">
    <location>
        <position position="57"/>
    </location>
    <ligand>
        <name>Zn(2+)</name>
        <dbReference type="ChEBI" id="CHEBI:29105"/>
        <label>1</label>
    </ligand>
</feature>
<feature type="binding site" evidence="1">
    <location>
        <position position="59"/>
    </location>
    <ligand>
        <name>Zn(2+)</name>
        <dbReference type="ChEBI" id="CHEBI:29105"/>
        <label>2</label>
    </ligand>
</feature>
<feature type="binding site" evidence="1">
    <location>
        <position position="60"/>
    </location>
    <ligand>
        <name>Zn(2+)</name>
        <dbReference type="ChEBI" id="CHEBI:29105"/>
        <label>2</label>
    </ligand>
</feature>
<feature type="binding site" evidence="1">
    <location>
        <position position="112"/>
    </location>
    <ligand>
        <name>Zn(2+)</name>
        <dbReference type="ChEBI" id="CHEBI:29105"/>
        <label>1</label>
    </ligand>
</feature>
<feature type="binding site" evidence="1">
    <location>
        <position position="129"/>
    </location>
    <ligand>
        <name>Zn(2+)</name>
        <dbReference type="ChEBI" id="CHEBI:29105"/>
        <label>1</label>
    </ligand>
</feature>
<feature type="binding site" evidence="1">
    <location>
        <position position="129"/>
    </location>
    <ligand>
        <name>Zn(2+)</name>
        <dbReference type="ChEBI" id="CHEBI:29105"/>
        <label>2</label>
    </ligand>
</feature>
<feature type="binding site" evidence="1">
    <location>
        <position position="167"/>
    </location>
    <ligand>
        <name>Zn(2+)</name>
        <dbReference type="ChEBI" id="CHEBI:29105"/>
        <label>2</label>
    </ligand>
</feature>
<dbReference type="EC" id="3.1.2.6" evidence="1"/>
<dbReference type="EMBL" id="CR954246">
    <property type="protein sequence ID" value="CAI87023.1"/>
    <property type="molecule type" value="Genomic_DNA"/>
</dbReference>
<dbReference type="SMR" id="Q3IIR9"/>
<dbReference type="STRING" id="326442.PSHAa1966"/>
<dbReference type="KEGG" id="pha:PSHAa1966"/>
<dbReference type="PATRIC" id="fig|326442.8.peg.1897"/>
<dbReference type="eggNOG" id="COG0491">
    <property type="taxonomic scope" value="Bacteria"/>
</dbReference>
<dbReference type="HOGENOM" id="CLU_030571_4_1_6"/>
<dbReference type="BioCyc" id="PHAL326442:PSHA_RS09730-MONOMER"/>
<dbReference type="UniPathway" id="UPA00619">
    <property type="reaction ID" value="UER00676"/>
</dbReference>
<dbReference type="Proteomes" id="UP000006843">
    <property type="component" value="Chromosome I"/>
</dbReference>
<dbReference type="GO" id="GO:0004416">
    <property type="term" value="F:hydroxyacylglutathione hydrolase activity"/>
    <property type="evidence" value="ECO:0007669"/>
    <property type="project" value="UniProtKB-UniRule"/>
</dbReference>
<dbReference type="GO" id="GO:0046872">
    <property type="term" value="F:metal ion binding"/>
    <property type="evidence" value="ECO:0007669"/>
    <property type="project" value="UniProtKB-KW"/>
</dbReference>
<dbReference type="GO" id="GO:0019243">
    <property type="term" value="P:methylglyoxal catabolic process to D-lactate via S-lactoyl-glutathione"/>
    <property type="evidence" value="ECO:0007669"/>
    <property type="project" value="InterPro"/>
</dbReference>
<dbReference type="CDD" id="cd07723">
    <property type="entry name" value="hydroxyacylglutathione_hydrolase_MBL-fold"/>
    <property type="match status" value="1"/>
</dbReference>
<dbReference type="Gene3D" id="3.60.15.10">
    <property type="entry name" value="Ribonuclease Z/Hydroxyacylglutathione hydrolase-like"/>
    <property type="match status" value="1"/>
</dbReference>
<dbReference type="HAMAP" id="MF_01374">
    <property type="entry name" value="Glyoxalase_2"/>
    <property type="match status" value="1"/>
</dbReference>
<dbReference type="InterPro" id="IPR035680">
    <property type="entry name" value="Clx_II_MBL"/>
</dbReference>
<dbReference type="InterPro" id="IPR050110">
    <property type="entry name" value="Glyoxalase_II_hydrolase"/>
</dbReference>
<dbReference type="InterPro" id="IPR032282">
    <property type="entry name" value="HAGH_C"/>
</dbReference>
<dbReference type="InterPro" id="IPR017782">
    <property type="entry name" value="Hydroxyacylglutathione_Hdrlase"/>
</dbReference>
<dbReference type="InterPro" id="IPR001279">
    <property type="entry name" value="Metallo-B-lactamas"/>
</dbReference>
<dbReference type="InterPro" id="IPR036866">
    <property type="entry name" value="RibonucZ/Hydroxyglut_hydro"/>
</dbReference>
<dbReference type="NCBIfam" id="TIGR03413">
    <property type="entry name" value="GSH_gloB"/>
    <property type="match status" value="1"/>
</dbReference>
<dbReference type="PANTHER" id="PTHR43705">
    <property type="entry name" value="HYDROXYACYLGLUTATHIONE HYDROLASE"/>
    <property type="match status" value="1"/>
</dbReference>
<dbReference type="PANTHER" id="PTHR43705:SF1">
    <property type="entry name" value="HYDROXYACYLGLUTATHIONE HYDROLASE GLOB"/>
    <property type="match status" value="1"/>
</dbReference>
<dbReference type="Pfam" id="PF16123">
    <property type="entry name" value="HAGH_C"/>
    <property type="match status" value="1"/>
</dbReference>
<dbReference type="Pfam" id="PF00753">
    <property type="entry name" value="Lactamase_B"/>
    <property type="match status" value="1"/>
</dbReference>
<dbReference type="PIRSF" id="PIRSF005457">
    <property type="entry name" value="Glx"/>
    <property type="match status" value="1"/>
</dbReference>
<dbReference type="SMART" id="SM00849">
    <property type="entry name" value="Lactamase_B"/>
    <property type="match status" value="1"/>
</dbReference>
<dbReference type="SUPFAM" id="SSF56281">
    <property type="entry name" value="Metallo-hydrolase/oxidoreductase"/>
    <property type="match status" value="1"/>
</dbReference>
<proteinExistence type="inferred from homology"/>